<sequence>MPKSVIIPAGSSAPLAPFVPGTLADGVVYVSGTLAFDQHNNVLFADDPKAQTRHVLETIRKVIETAGGTMADVTFNSIFITDWKNYAAINEIYAEFFPGDKPARFCIQCGLVKPDALVEIATIAHIAK</sequence>
<protein>
    <recommendedName>
        <fullName evidence="1">3-aminoacrylate deaminase RutC</fullName>
        <shortName evidence="1">3-AA deaminase</shortName>
        <ecNumber evidence="1">3.5.-.-</ecNumber>
    </recommendedName>
</protein>
<keyword id="KW-0378">Hydrolase</keyword>
<keyword id="KW-1185">Reference proteome</keyword>
<name>RUTC_ECO24</name>
<proteinExistence type="inferred from homology"/>
<evidence type="ECO:0000255" key="1">
    <source>
        <dbReference type="HAMAP-Rule" id="MF_00831"/>
    </source>
</evidence>
<accession>A7ZKB5</accession>
<reference key="1">
    <citation type="journal article" date="2008" name="J. Bacteriol.">
        <title>The pangenome structure of Escherichia coli: comparative genomic analysis of E. coli commensal and pathogenic isolates.</title>
        <authorList>
            <person name="Rasko D.A."/>
            <person name="Rosovitz M.J."/>
            <person name="Myers G.S.A."/>
            <person name="Mongodin E.F."/>
            <person name="Fricke W.F."/>
            <person name="Gajer P."/>
            <person name="Crabtree J."/>
            <person name="Sebaihia M."/>
            <person name="Thomson N.R."/>
            <person name="Chaudhuri R."/>
            <person name="Henderson I.R."/>
            <person name="Sperandio V."/>
            <person name="Ravel J."/>
        </authorList>
    </citation>
    <scope>NUCLEOTIDE SEQUENCE [LARGE SCALE GENOMIC DNA]</scope>
    <source>
        <strain>E24377A / ETEC</strain>
    </source>
</reference>
<gene>
    <name evidence="1" type="primary">rutC</name>
    <name type="ordered locus">EcE24377A_1128</name>
</gene>
<dbReference type="EC" id="3.5.-.-" evidence="1"/>
<dbReference type="EMBL" id="CP000800">
    <property type="protein sequence ID" value="ABV17307.1"/>
    <property type="molecule type" value="Genomic_DNA"/>
</dbReference>
<dbReference type="RefSeq" id="WP_001126780.1">
    <property type="nucleotide sequence ID" value="NC_009801.1"/>
</dbReference>
<dbReference type="SMR" id="A7ZKB5"/>
<dbReference type="GeneID" id="75171086"/>
<dbReference type="KEGG" id="ecw:EcE24377A_1128"/>
<dbReference type="HOGENOM" id="CLU_100715_7_3_6"/>
<dbReference type="Proteomes" id="UP000001122">
    <property type="component" value="Chromosome"/>
</dbReference>
<dbReference type="GO" id="GO:0005829">
    <property type="term" value="C:cytosol"/>
    <property type="evidence" value="ECO:0007669"/>
    <property type="project" value="TreeGrafter"/>
</dbReference>
<dbReference type="GO" id="GO:0019239">
    <property type="term" value="F:deaminase activity"/>
    <property type="evidence" value="ECO:0007669"/>
    <property type="project" value="TreeGrafter"/>
</dbReference>
<dbReference type="GO" id="GO:0019740">
    <property type="term" value="P:nitrogen utilization"/>
    <property type="evidence" value="ECO:0007669"/>
    <property type="project" value="UniProtKB-UniRule"/>
</dbReference>
<dbReference type="GO" id="GO:0006212">
    <property type="term" value="P:uracil catabolic process"/>
    <property type="evidence" value="ECO:0007669"/>
    <property type="project" value="UniProtKB-UniRule"/>
</dbReference>
<dbReference type="CDD" id="cd00448">
    <property type="entry name" value="YjgF_YER057c_UK114_family"/>
    <property type="match status" value="1"/>
</dbReference>
<dbReference type="FunFam" id="3.30.1330.40:FF:000003">
    <property type="entry name" value="Putative aminoacrylate peracid reductase RutC"/>
    <property type="match status" value="1"/>
</dbReference>
<dbReference type="Gene3D" id="3.30.1330.40">
    <property type="entry name" value="RutC-like"/>
    <property type="match status" value="1"/>
</dbReference>
<dbReference type="HAMAP" id="MF_00831">
    <property type="entry name" value="RutC"/>
    <property type="match status" value="1"/>
</dbReference>
<dbReference type="InterPro" id="IPR019897">
    <property type="entry name" value="RidA_CS"/>
</dbReference>
<dbReference type="InterPro" id="IPR019898">
    <property type="entry name" value="RutC"/>
</dbReference>
<dbReference type="InterPro" id="IPR035959">
    <property type="entry name" value="RutC-like_sf"/>
</dbReference>
<dbReference type="InterPro" id="IPR006175">
    <property type="entry name" value="YjgF/YER057c/UK114"/>
</dbReference>
<dbReference type="NCBIfam" id="TIGR03610">
    <property type="entry name" value="RutC"/>
    <property type="match status" value="1"/>
</dbReference>
<dbReference type="PANTHER" id="PTHR11803">
    <property type="entry name" value="2-IMINOBUTANOATE/2-IMINOPROPANOATE DEAMINASE RIDA"/>
    <property type="match status" value="1"/>
</dbReference>
<dbReference type="PANTHER" id="PTHR11803:SF58">
    <property type="entry name" value="PROTEIN HMF1-RELATED"/>
    <property type="match status" value="1"/>
</dbReference>
<dbReference type="Pfam" id="PF01042">
    <property type="entry name" value="Ribonuc_L-PSP"/>
    <property type="match status" value="1"/>
</dbReference>
<dbReference type="SUPFAM" id="SSF55298">
    <property type="entry name" value="YjgF-like"/>
    <property type="match status" value="1"/>
</dbReference>
<dbReference type="PROSITE" id="PS01094">
    <property type="entry name" value="UPF0076"/>
    <property type="match status" value="1"/>
</dbReference>
<organism>
    <name type="scientific">Escherichia coli O139:H28 (strain E24377A / ETEC)</name>
    <dbReference type="NCBI Taxonomy" id="331111"/>
    <lineage>
        <taxon>Bacteria</taxon>
        <taxon>Pseudomonadati</taxon>
        <taxon>Pseudomonadota</taxon>
        <taxon>Gammaproteobacteria</taxon>
        <taxon>Enterobacterales</taxon>
        <taxon>Enterobacteriaceae</taxon>
        <taxon>Escherichia</taxon>
    </lineage>
</organism>
<feature type="chain" id="PRO_0000402735" description="3-aminoacrylate deaminase RutC">
    <location>
        <begin position="1"/>
        <end position="128"/>
    </location>
</feature>
<comment type="function">
    <text evidence="1">Involved in pyrimidine catabolism. Catalyzes the deamination of 3-aminoacrylate to malonic semialdehyde, a reaction that can also occur spontaneously. RutC may facilitate the reaction and modulate the metabolic fitness, rather than catalyzing essential functions.</text>
</comment>
<comment type="catalytic activity">
    <reaction evidence="1">
        <text>(Z)-3-aminoacrylate + H2O + H(+) = 3-oxopropanoate + NH4(+)</text>
        <dbReference type="Rhea" id="RHEA:34947"/>
        <dbReference type="ChEBI" id="CHEBI:15377"/>
        <dbReference type="ChEBI" id="CHEBI:15378"/>
        <dbReference type="ChEBI" id="CHEBI:28938"/>
        <dbReference type="ChEBI" id="CHEBI:33190"/>
        <dbReference type="ChEBI" id="CHEBI:59894"/>
    </reaction>
</comment>
<comment type="subunit">
    <text evidence="1">Homotrimer.</text>
</comment>
<comment type="similarity">
    <text evidence="1">Belongs to the RutC family.</text>
</comment>